<accession>Q7WKM1</accession>
<proteinExistence type="inferred from homology"/>
<sequence length="314" mass="33213">MAAVERLTIATRASRLALWQAEHVRDLLRARYPACSVELLTLTTRGDQILDRTLSKVGGKGLFVKELETALLDGRADLAVHSLKDVPVDLHAPFELSCVLERADPRDAFVSNDYGSLADLPPGAAVGTSSLRRESQIRARYPHLVVKPLRGNLDTRLGKLDNGDYAAIVLAAAGLERLGLAARIRALLEPADSLPAAGQGALGIEILQGRADVRAMLAPLGDAATLACVTAERAVSRMLGGSCQVPLAAYARIDGDELALRALVAAPDGRRIVRAERRGPRDQAQAIGESAARDLLADGADAILAELLPTSPAP</sequence>
<name>HEM3_BORBR</name>
<comment type="function">
    <text evidence="1">Tetrapolymerization of the monopyrrole PBG into the hydroxymethylbilane pre-uroporphyrinogen in several discrete steps.</text>
</comment>
<comment type="catalytic activity">
    <reaction evidence="1">
        <text>4 porphobilinogen + H2O = hydroxymethylbilane + 4 NH4(+)</text>
        <dbReference type="Rhea" id="RHEA:13185"/>
        <dbReference type="ChEBI" id="CHEBI:15377"/>
        <dbReference type="ChEBI" id="CHEBI:28938"/>
        <dbReference type="ChEBI" id="CHEBI:57845"/>
        <dbReference type="ChEBI" id="CHEBI:58126"/>
        <dbReference type="EC" id="2.5.1.61"/>
    </reaction>
</comment>
<comment type="cofactor">
    <cofactor evidence="1">
        <name>dipyrromethane</name>
        <dbReference type="ChEBI" id="CHEBI:60342"/>
    </cofactor>
    <text evidence="1">Binds 1 dipyrromethane group covalently.</text>
</comment>
<comment type="pathway">
    <text evidence="1">Porphyrin-containing compound metabolism; protoporphyrin-IX biosynthesis; coproporphyrinogen-III from 5-aminolevulinate: step 2/4.</text>
</comment>
<comment type="subunit">
    <text evidence="1">Monomer.</text>
</comment>
<comment type="miscellaneous">
    <text evidence="1">The porphobilinogen subunits are added to the dipyrromethane group.</text>
</comment>
<comment type="similarity">
    <text evidence="1">Belongs to the HMBS family.</text>
</comment>
<dbReference type="EC" id="2.5.1.61" evidence="1"/>
<dbReference type="EMBL" id="BX640443">
    <property type="protein sequence ID" value="CAE32581.1"/>
    <property type="molecule type" value="Genomic_DNA"/>
</dbReference>
<dbReference type="RefSeq" id="WP_003812742.1">
    <property type="nucleotide sequence ID" value="NC_002927.3"/>
</dbReference>
<dbReference type="SMR" id="Q7WKM1"/>
<dbReference type="GeneID" id="93204427"/>
<dbReference type="KEGG" id="bbr:BB2085"/>
<dbReference type="eggNOG" id="COG0181">
    <property type="taxonomic scope" value="Bacteria"/>
</dbReference>
<dbReference type="HOGENOM" id="CLU_019704_1_0_4"/>
<dbReference type="UniPathway" id="UPA00251">
    <property type="reaction ID" value="UER00319"/>
</dbReference>
<dbReference type="Proteomes" id="UP000001027">
    <property type="component" value="Chromosome"/>
</dbReference>
<dbReference type="GO" id="GO:0005737">
    <property type="term" value="C:cytoplasm"/>
    <property type="evidence" value="ECO:0007669"/>
    <property type="project" value="TreeGrafter"/>
</dbReference>
<dbReference type="GO" id="GO:0004418">
    <property type="term" value="F:hydroxymethylbilane synthase activity"/>
    <property type="evidence" value="ECO:0007669"/>
    <property type="project" value="UniProtKB-UniRule"/>
</dbReference>
<dbReference type="GO" id="GO:0006782">
    <property type="term" value="P:protoporphyrinogen IX biosynthetic process"/>
    <property type="evidence" value="ECO:0007669"/>
    <property type="project" value="UniProtKB-UniRule"/>
</dbReference>
<dbReference type="CDD" id="cd13646">
    <property type="entry name" value="PBP2_EcHMBS_like"/>
    <property type="match status" value="1"/>
</dbReference>
<dbReference type="FunFam" id="3.40.190.10:FF:000004">
    <property type="entry name" value="Porphobilinogen deaminase"/>
    <property type="match status" value="1"/>
</dbReference>
<dbReference type="FunFam" id="3.40.190.10:FF:000005">
    <property type="entry name" value="Porphobilinogen deaminase"/>
    <property type="match status" value="1"/>
</dbReference>
<dbReference type="Gene3D" id="3.40.190.10">
    <property type="entry name" value="Periplasmic binding protein-like II"/>
    <property type="match status" value="2"/>
</dbReference>
<dbReference type="Gene3D" id="3.30.160.40">
    <property type="entry name" value="Porphobilinogen deaminase, C-terminal domain"/>
    <property type="match status" value="1"/>
</dbReference>
<dbReference type="HAMAP" id="MF_00260">
    <property type="entry name" value="Porphobil_deam"/>
    <property type="match status" value="1"/>
</dbReference>
<dbReference type="InterPro" id="IPR000860">
    <property type="entry name" value="HemC"/>
</dbReference>
<dbReference type="InterPro" id="IPR022419">
    <property type="entry name" value="Porphobilin_deaminase_cofac_BS"/>
</dbReference>
<dbReference type="InterPro" id="IPR022417">
    <property type="entry name" value="Porphobilin_deaminase_N"/>
</dbReference>
<dbReference type="InterPro" id="IPR022418">
    <property type="entry name" value="Porphobilinogen_deaminase_C"/>
</dbReference>
<dbReference type="InterPro" id="IPR036803">
    <property type="entry name" value="Porphobilinogen_deaminase_C_sf"/>
</dbReference>
<dbReference type="NCBIfam" id="TIGR00212">
    <property type="entry name" value="hemC"/>
    <property type="match status" value="1"/>
</dbReference>
<dbReference type="PANTHER" id="PTHR11557">
    <property type="entry name" value="PORPHOBILINOGEN DEAMINASE"/>
    <property type="match status" value="1"/>
</dbReference>
<dbReference type="PANTHER" id="PTHR11557:SF0">
    <property type="entry name" value="PORPHOBILINOGEN DEAMINASE"/>
    <property type="match status" value="1"/>
</dbReference>
<dbReference type="Pfam" id="PF01379">
    <property type="entry name" value="Porphobil_deam"/>
    <property type="match status" value="1"/>
</dbReference>
<dbReference type="Pfam" id="PF03900">
    <property type="entry name" value="Porphobil_deamC"/>
    <property type="match status" value="1"/>
</dbReference>
<dbReference type="PIRSF" id="PIRSF001438">
    <property type="entry name" value="4pyrrol_synth_OHMeBilane_synth"/>
    <property type="match status" value="1"/>
</dbReference>
<dbReference type="PRINTS" id="PR00151">
    <property type="entry name" value="PORPHBDMNASE"/>
</dbReference>
<dbReference type="SUPFAM" id="SSF53850">
    <property type="entry name" value="Periplasmic binding protein-like II"/>
    <property type="match status" value="1"/>
</dbReference>
<dbReference type="SUPFAM" id="SSF54782">
    <property type="entry name" value="Porphobilinogen deaminase (hydroxymethylbilane synthase), C-terminal domain"/>
    <property type="match status" value="1"/>
</dbReference>
<dbReference type="PROSITE" id="PS00533">
    <property type="entry name" value="PORPHOBILINOGEN_DEAM"/>
    <property type="match status" value="1"/>
</dbReference>
<feature type="chain" id="PRO_0000142911" description="Porphobilinogen deaminase">
    <location>
        <begin position="1"/>
        <end position="314"/>
    </location>
</feature>
<feature type="modified residue" description="S-(dipyrrolylmethanemethyl)cysteine" evidence="1">
    <location>
        <position position="243"/>
    </location>
</feature>
<evidence type="ECO:0000255" key="1">
    <source>
        <dbReference type="HAMAP-Rule" id="MF_00260"/>
    </source>
</evidence>
<keyword id="KW-0627">Porphyrin biosynthesis</keyword>
<keyword id="KW-0808">Transferase</keyword>
<protein>
    <recommendedName>
        <fullName evidence="1">Porphobilinogen deaminase</fullName>
        <shortName evidence="1">PBG</shortName>
        <ecNumber evidence="1">2.5.1.61</ecNumber>
    </recommendedName>
    <alternativeName>
        <fullName evidence="1">Hydroxymethylbilane synthase</fullName>
        <shortName evidence="1">HMBS</shortName>
    </alternativeName>
    <alternativeName>
        <fullName evidence="1">Pre-uroporphyrinogen synthase</fullName>
    </alternativeName>
</protein>
<reference key="1">
    <citation type="journal article" date="2003" name="Nat. Genet.">
        <title>Comparative analysis of the genome sequences of Bordetella pertussis, Bordetella parapertussis and Bordetella bronchiseptica.</title>
        <authorList>
            <person name="Parkhill J."/>
            <person name="Sebaihia M."/>
            <person name="Preston A."/>
            <person name="Murphy L.D."/>
            <person name="Thomson N.R."/>
            <person name="Harris D.E."/>
            <person name="Holden M.T.G."/>
            <person name="Churcher C.M."/>
            <person name="Bentley S.D."/>
            <person name="Mungall K.L."/>
            <person name="Cerdeno-Tarraga A.-M."/>
            <person name="Temple L."/>
            <person name="James K.D."/>
            <person name="Harris B."/>
            <person name="Quail M.A."/>
            <person name="Achtman M."/>
            <person name="Atkin R."/>
            <person name="Baker S."/>
            <person name="Basham D."/>
            <person name="Bason N."/>
            <person name="Cherevach I."/>
            <person name="Chillingworth T."/>
            <person name="Collins M."/>
            <person name="Cronin A."/>
            <person name="Davis P."/>
            <person name="Doggett J."/>
            <person name="Feltwell T."/>
            <person name="Goble A."/>
            <person name="Hamlin N."/>
            <person name="Hauser H."/>
            <person name="Holroyd S."/>
            <person name="Jagels K."/>
            <person name="Leather S."/>
            <person name="Moule S."/>
            <person name="Norberczak H."/>
            <person name="O'Neil S."/>
            <person name="Ormond D."/>
            <person name="Price C."/>
            <person name="Rabbinowitsch E."/>
            <person name="Rutter S."/>
            <person name="Sanders M."/>
            <person name="Saunders D."/>
            <person name="Seeger K."/>
            <person name="Sharp S."/>
            <person name="Simmonds M."/>
            <person name="Skelton J."/>
            <person name="Squares R."/>
            <person name="Squares S."/>
            <person name="Stevens K."/>
            <person name="Unwin L."/>
            <person name="Whitehead S."/>
            <person name="Barrell B.G."/>
            <person name="Maskell D.J."/>
        </authorList>
    </citation>
    <scope>NUCLEOTIDE SEQUENCE [LARGE SCALE GENOMIC DNA]</scope>
    <source>
        <strain>ATCC BAA-588 / NCTC 13252 / RB50</strain>
    </source>
</reference>
<gene>
    <name evidence="1" type="primary">hemC</name>
    <name type="ordered locus">BB2085</name>
</gene>
<organism>
    <name type="scientific">Bordetella bronchiseptica (strain ATCC BAA-588 / NCTC 13252 / RB50)</name>
    <name type="common">Alcaligenes bronchisepticus</name>
    <dbReference type="NCBI Taxonomy" id="257310"/>
    <lineage>
        <taxon>Bacteria</taxon>
        <taxon>Pseudomonadati</taxon>
        <taxon>Pseudomonadota</taxon>
        <taxon>Betaproteobacteria</taxon>
        <taxon>Burkholderiales</taxon>
        <taxon>Alcaligenaceae</taxon>
        <taxon>Bordetella</taxon>
    </lineage>
</organism>